<evidence type="ECO:0000250" key="1">
    <source>
        <dbReference type="UniProtKB" id="P04308"/>
    </source>
</evidence>
<evidence type="ECO:0000255" key="2">
    <source>
        <dbReference type="PROSITE-ProRule" id="PRU00541"/>
    </source>
</evidence>
<evidence type="ECO:0000255" key="3">
    <source>
        <dbReference type="PROSITE-ProRule" id="PRU00542"/>
    </source>
</evidence>
<evidence type="ECO:0000305" key="4"/>
<organismHost>
    <name type="scientific">Homo sapiens</name>
    <name type="common">Human</name>
    <dbReference type="NCBI Taxonomy" id="9606"/>
</organismHost>
<proteinExistence type="inferred from homology"/>
<feature type="chain" id="PRO_0000099070" description="Early transcription factor 70 kDa subunit">
    <location>
        <begin position="1"/>
        <end position="637"/>
    </location>
</feature>
<feature type="domain" description="Helicase ATP-binding" evidence="2">
    <location>
        <begin position="32"/>
        <end position="185"/>
    </location>
</feature>
<feature type="domain" description="Helicase C-terminal" evidence="3">
    <location>
        <begin position="327"/>
        <end position="507"/>
    </location>
</feature>
<feature type="short sequence motif" description="DEXH box">
    <location>
        <begin position="135"/>
        <end position="138"/>
    </location>
</feature>
<feature type="binding site" evidence="2">
    <location>
        <begin position="45"/>
        <end position="52"/>
    </location>
    <ligand>
        <name>ATP</name>
        <dbReference type="ChEBI" id="CHEBI:30616"/>
    </ligand>
</feature>
<name>ETF1_VACCT</name>
<sequence length="637" mass="73801">MNTGIIDLFDNHVDSIPTILPHQLATLDYLVRTIIDENRSVLLFHIMGSGKTIIALLFALVASRFKKVYILVPNINILKIFNYNMGVAMNLFNDEFIAENIFIHSTTGFYSLNYNDNVINYNGLSRYNNSIFIVDEAHNIFGNNTGELMTVIKNKNKIPFLLLSGSPITNTPNTLGHIIDLMSEETIDFGEIISRGKKVIQTLLNERGVNVLKDLLKGRISYYEMPDKDLPTIRYHGRKFLDTRVVYCHMSKLQERDYMITRRQLCYHEMFDKNMYNVSMAVLGQLNLMNNLDTLFQEQDKELYPNLKINNGVLYGEELVTLNISSKFKYFINRIQTLNGKHFIYFSNSTYGGLVIKYIMLSNGYSEYNGSQGTNPHMINGKPKTFAIVTSKMKSSLEDLLDVYNSPENDDGSQLMFLFSSNIMSESYTLKEVRHIWFMTIPDTFSQYNQILGRSIRKFSYADISEPVNVYLLAAVYSDFNDEVTSLNDYTQDELINVLPFDIKKLLYLKFKTKETNRIYSILQEMSETYSLPPHPSIVKVLLGELVRQFFYNNSRIKYNDSKLLKMVTSVIKNKEDARNYIDDIVNGHFFVSNKVFDKSLLYKYENDIITVPFRLSYEPFVWGVNFRKEYNVVSSP</sequence>
<protein>
    <recommendedName>
        <fullName>Early transcription factor 70 kDa subunit</fullName>
        <ecNumber>3.6.4.-</ecNumber>
    </recommendedName>
    <alternativeName>
        <fullName>ATP-dependent helicase VETFS</fullName>
    </alternativeName>
    <alternativeName>
        <fullName>ETF small subunit</fullName>
    </alternativeName>
    <alternativeName>
        <fullName>VETF D6 subunit</fullName>
    </alternativeName>
    <alternativeName>
        <fullName>Vaccinia virus early transcription factor small subunit</fullName>
        <shortName>VETF small subunit</shortName>
    </alternativeName>
</protein>
<gene>
    <name type="primary">OPG118</name>
    <name type="synonym">VETFS</name>
    <name type="ORF">TD6R</name>
</gene>
<accession>Q9JFA3</accession>
<dbReference type="EC" id="3.6.4.-"/>
<dbReference type="EMBL" id="AF095689">
    <property type="protein sequence ID" value="AAF33975.1"/>
    <property type="molecule type" value="Genomic_DNA"/>
</dbReference>
<dbReference type="SMR" id="Q9JFA3"/>
<dbReference type="Proteomes" id="UP000163220">
    <property type="component" value="Genome"/>
</dbReference>
<dbReference type="GO" id="GO:0044423">
    <property type="term" value="C:virion component"/>
    <property type="evidence" value="ECO:0007669"/>
    <property type="project" value="UniProtKB-KW"/>
</dbReference>
<dbReference type="GO" id="GO:0005524">
    <property type="term" value="F:ATP binding"/>
    <property type="evidence" value="ECO:0007669"/>
    <property type="project" value="UniProtKB-KW"/>
</dbReference>
<dbReference type="GO" id="GO:0003677">
    <property type="term" value="F:DNA binding"/>
    <property type="evidence" value="ECO:0000250"/>
    <property type="project" value="UniProtKB"/>
</dbReference>
<dbReference type="GO" id="GO:0004386">
    <property type="term" value="F:helicase activity"/>
    <property type="evidence" value="ECO:0007669"/>
    <property type="project" value="UniProtKB-KW"/>
</dbReference>
<dbReference type="GO" id="GO:0016787">
    <property type="term" value="F:hydrolase activity"/>
    <property type="evidence" value="ECO:0007669"/>
    <property type="project" value="UniProtKB-KW"/>
</dbReference>
<dbReference type="CDD" id="cd18785">
    <property type="entry name" value="SF2_C"/>
    <property type="match status" value="1"/>
</dbReference>
<dbReference type="FunFam" id="3.40.50.300:FF:001785">
    <property type="entry name" value="Early gene transcription factor VETF small subunit"/>
    <property type="match status" value="1"/>
</dbReference>
<dbReference type="Gene3D" id="3.40.50.300">
    <property type="entry name" value="P-loop containing nucleotide triphosphate hydrolases"/>
    <property type="match status" value="2"/>
</dbReference>
<dbReference type="InterPro" id="IPR002464">
    <property type="entry name" value="DNA/RNA_helicase_DEAH_CS"/>
</dbReference>
<dbReference type="InterPro" id="IPR006935">
    <property type="entry name" value="Helicase/UvrB_N"/>
</dbReference>
<dbReference type="InterPro" id="IPR014001">
    <property type="entry name" value="Helicase_ATP-bd"/>
</dbReference>
<dbReference type="InterPro" id="IPR001650">
    <property type="entry name" value="Helicase_C-like"/>
</dbReference>
<dbReference type="InterPro" id="IPR027417">
    <property type="entry name" value="P-loop_NTPase"/>
</dbReference>
<dbReference type="Pfam" id="PF00271">
    <property type="entry name" value="Helicase_C"/>
    <property type="match status" value="1"/>
</dbReference>
<dbReference type="Pfam" id="PF04851">
    <property type="entry name" value="ResIII"/>
    <property type="match status" value="1"/>
</dbReference>
<dbReference type="SMART" id="SM00487">
    <property type="entry name" value="DEXDc"/>
    <property type="match status" value="1"/>
</dbReference>
<dbReference type="SMART" id="SM00490">
    <property type="entry name" value="HELICc"/>
    <property type="match status" value="1"/>
</dbReference>
<dbReference type="SUPFAM" id="SSF52540">
    <property type="entry name" value="P-loop containing nucleoside triphosphate hydrolases"/>
    <property type="match status" value="1"/>
</dbReference>
<dbReference type="PROSITE" id="PS00690">
    <property type="entry name" value="DEAH_ATP_HELICASE"/>
    <property type="match status" value="1"/>
</dbReference>
<dbReference type="PROSITE" id="PS51192">
    <property type="entry name" value="HELICASE_ATP_BIND_1"/>
    <property type="match status" value="1"/>
</dbReference>
<dbReference type="PROSITE" id="PS51194">
    <property type="entry name" value="HELICASE_CTER"/>
    <property type="match status" value="1"/>
</dbReference>
<keyword id="KW-0010">Activator</keyword>
<keyword id="KW-0067">ATP-binding</keyword>
<keyword id="KW-0238">DNA-binding</keyword>
<keyword id="KW-0347">Helicase</keyword>
<keyword id="KW-0378">Hydrolase</keyword>
<keyword id="KW-0426">Late protein</keyword>
<keyword id="KW-0547">Nucleotide-binding</keyword>
<keyword id="KW-0804">Transcription</keyword>
<keyword id="KW-0805">Transcription regulation</keyword>
<keyword id="KW-0946">Virion</keyword>
<organism>
    <name type="scientific">Vaccinia virus (strain Tian Tan)</name>
    <name type="common">VACV</name>
    <dbReference type="NCBI Taxonomy" id="10253"/>
    <lineage>
        <taxon>Viruses</taxon>
        <taxon>Varidnaviria</taxon>
        <taxon>Bamfordvirae</taxon>
        <taxon>Nucleocytoviricota</taxon>
        <taxon>Pokkesviricetes</taxon>
        <taxon>Chitovirales</taxon>
        <taxon>Poxviridae</taxon>
        <taxon>Chordopoxvirinae</taxon>
        <taxon>Orthopoxvirus</taxon>
        <taxon>Vaccinia virus</taxon>
    </lineage>
</organism>
<reference key="1">
    <citation type="submission" date="1998-09" db="EMBL/GenBank/DDBJ databases">
        <title>Complete genomic sequence of vaccinia virus (Tian Tan strain).</title>
        <authorList>
            <person name="Jin Q."/>
            <person name="Hou Y.D."/>
            <person name="Cheng N.H."/>
            <person name="Yao E.M."/>
            <person name="Cheng S.X."/>
            <person name="Yang X.K."/>
            <person name="Jing D.Y."/>
            <person name="Yu W.H."/>
            <person name="Yuan J.S."/>
            <person name="Ma X.J."/>
        </authorList>
    </citation>
    <scope>NUCLEOTIDE SEQUENCE [LARGE SCALE GENOMIC DNA]</scope>
</reference>
<comment type="function">
    <text evidence="1">Acts with RNA polymerase to initiate transcription from early gene promoters. Is recruited by the RPO-associated protein of 94 kDa RAP94/OPG109 to form the early transcription complex, which also contains the core RNA polymerase. ETF heterodimer binds to early gene promoters.</text>
</comment>
<comment type="subunit">
    <text evidence="1">Heterodimer of a 70 kDa and a 82 kDa subunit. Part of the early transcription complex composed of ETF, RAP94/OPG109, and the DNA-directed RNA polymerase.</text>
</comment>
<comment type="subcellular location">
    <subcellularLocation>
        <location evidence="1">Virion</location>
    </subcellularLocation>
    <text evidence="1">All the enzymes and other proteins required to synthesize early mRNAs are packaged within the virion core along with the DNA genome. This is necessary because viral early mRNAs are synthesized within minutes after virus entry into the cell and are extruded through pores in the core particle.</text>
</comment>
<comment type="similarity">
    <text evidence="4">Belongs to the helicase family. VETF subfamily.</text>
</comment>